<dbReference type="EMBL" id="AB001684">
    <property type="protein sequence ID" value="BAA57967.1"/>
    <property type="molecule type" value="Genomic_DNA"/>
</dbReference>
<dbReference type="PIR" id="T07319">
    <property type="entry name" value="T07319"/>
</dbReference>
<dbReference type="RefSeq" id="NP_045891.1">
    <property type="nucleotide sequence ID" value="NC_001865.1"/>
</dbReference>
<dbReference type="SMR" id="P56370"/>
<dbReference type="GO" id="GO:0031969">
    <property type="term" value="C:chloroplast membrane"/>
    <property type="evidence" value="ECO:0007669"/>
    <property type="project" value="UniProtKB-SubCell"/>
</dbReference>
<geneLocation type="chloroplast"/>
<proteinExistence type="inferred from homology"/>
<sequence length="819" mass="94727">MSFVTTIRDYAETLNSISDSLGQNFTVRSFILETIVYIFTTCRSCLFYILSFQWIHDFTLLPIVLPEFSSALFREKFFLETPSKVFFDFLEISDLQQNKFLLGFFNSFFLSLPFSVIHILSLRRLLIQGRPAGVYTIGGYLIGQLVFLTCVVFGIRQVLVPWLTLEPFNYLLGIILLFRVIYSMTRENLIELKGWSNPRYTNFFLVSFVLAWCEQTSCFQYLGNITLSSNVTILESFSSTSSISTFFTHTSYLLGIAIGSVLFSLFWGWVFLQVKNLCIFYTPLFTSSFLQFFNKTSFVLALALSLTSIPFYSFEYLVTGPLGFVSQDSVFKNTLLDQTLIKDPGKGLTGLSSLERNFQYLDVDVSPFDRGEYLTVPEVPQNLSFEELNYRGEFDWTLRNLKVSGITDSRSGFFTLSKLFKKENKKSLDSQKQLSSQEISERNPLLSELPLVFRVDLATHYDILNRYRQFYDGNVEESDSDPLLQRPIETISDSSFPSSGEAPQPRVENTIESKIKNKYYSNPVYKNLLALDIDLFLKRQPKTFQVNADQEIDLYTKRKMLEYYTNSLNSYSQLPYFETFDSFFDGAKTFSNKVYNQQFKGTLRSVRRLFTVRNDFVSSSEKLESKTEKVLKFDQPLYQFAEKQPFSPYHEELAQKPEQVLPRAKIGGISFVNTPLYAGWDEHLRKFVITNKLLPRTFAGYKVKIEPQTLKNFTNYSVKQTTKIKFTRWPLSEEKLQLSKQDSSVPYVTLFKILDEKTKETFAENKYLSFPANFELVEFSESQNEKGTTEKLKKPTLVPNRGGFVWPGNSKFKLPLLSN</sequence>
<name>YCF78_CHLVU</name>
<keyword id="KW-0150">Chloroplast</keyword>
<keyword id="KW-0472">Membrane</keyword>
<keyword id="KW-0934">Plastid</keyword>
<keyword id="KW-0812">Transmembrane</keyword>
<keyword id="KW-1133">Transmembrane helix</keyword>
<comment type="subcellular location">
    <subcellularLocation>
        <location evidence="2">Plastid</location>
        <location evidence="2">Chloroplast membrane</location>
        <topology evidence="2">Multi-pass membrane protein</topology>
    </subcellularLocation>
</comment>
<comment type="similarity">
    <text evidence="2">Belongs to the ycf78 family.</text>
</comment>
<gene>
    <name type="primary">ycf78</name>
</gene>
<feature type="chain" id="PRO_0000217518" description="Uncharacterized membrane protein ycf78">
    <location>
        <begin position="1"/>
        <end position="819"/>
    </location>
</feature>
<feature type="transmembrane region" description="Helical" evidence="1">
    <location>
        <begin position="45"/>
        <end position="65"/>
    </location>
</feature>
<feature type="transmembrane region" description="Helical" evidence="1">
    <location>
        <begin position="100"/>
        <end position="120"/>
    </location>
</feature>
<feature type="transmembrane region" description="Helical" evidence="1">
    <location>
        <begin position="135"/>
        <end position="155"/>
    </location>
</feature>
<feature type="transmembrane region" description="Helical" evidence="1">
    <location>
        <begin position="158"/>
        <end position="178"/>
    </location>
</feature>
<feature type="transmembrane region" description="Helical" evidence="1">
    <location>
        <begin position="252"/>
        <end position="272"/>
    </location>
</feature>
<feature type="transmembrane region" description="Helical" evidence="1">
    <location>
        <begin position="298"/>
        <end position="318"/>
    </location>
</feature>
<reference key="1">
    <citation type="journal article" date="1997" name="Proc. Natl. Acad. Sci. U.S.A.">
        <title>Complete nucleotide sequence of the chloroplast genome from the green alga Chlorella vulgaris: the existence of genes possibly involved in chloroplast division.</title>
        <authorList>
            <person name="Wakasugi T."/>
            <person name="Nagai T."/>
            <person name="Kapoor M."/>
            <person name="Sugita M."/>
            <person name="Ito M."/>
            <person name="Ito S."/>
            <person name="Tsudzuki J."/>
            <person name="Nakashima K."/>
            <person name="Tsudzuki T."/>
            <person name="Suzuki Y."/>
            <person name="Hamada A."/>
            <person name="Ohta T."/>
            <person name="Inamura A."/>
            <person name="Yoshinaga K."/>
            <person name="Sugiura M."/>
        </authorList>
    </citation>
    <scope>NUCLEOTIDE SEQUENCE [LARGE SCALE GENOMIC DNA]</scope>
    <source>
        <strain>IAM C-27 / Tamiya</strain>
    </source>
</reference>
<accession>P56370</accession>
<organism>
    <name type="scientific">Chlorella vulgaris</name>
    <name type="common">Green alga</name>
    <dbReference type="NCBI Taxonomy" id="3077"/>
    <lineage>
        <taxon>Eukaryota</taxon>
        <taxon>Viridiplantae</taxon>
        <taxon>Chlorophyta</taxon>
        <taxon>core chlorophytes</taxon>
        <taxon>Trebouxiophyceae</taxon>
        <taxon>Chlorellales</taxon>
        <taxon>Chlorellaceae</taxon>
        <taxon>Chlorella clade</taxon>
        <taxon>Chlorella</taxon>
    </lineage>
</organism>
<protein>
    <recommendedName>
        <fullName>Uncharacterized membrane protein ycf78</fullName>
    </recommendedName>
    <alternativeName>
        <fullName>ORF819</fullName>
    </alternativeName>
</protein>
<evidence type="ECO:0000255" key="1"/>
<evidence type="ECO:0000305" key="2"/>